<name>SYFA_ACTP7</name>
<accession>B3H137</accession>
<evidence type="ECO:0000255" key="1">
    <source>
        <dbReference type="HAMAP-Rule" id="MF_00281"/>
    </source>
</evidence>
<proteinExistence type="inferred from homology"/>
<sequence>MQHLKELTEKARSALDALDQGLDALEEFRVEYFGKKGHFTALMQELRNVAAEERPAIGAKINEAKQTILDILNAKKEAWEQEALNAKLAAESIDVSLPGRKTELGGLHPVSITIERVVKFFSELGFTVASGPEIETDYYNFDALNIPAHHPARADHDTFWFDAQRLLRTQTSGVQIRTMENMQPPIRIVAPGRVYRNDYDQTHTPMFHQIELLYVDKKANFTELKGLIHDFLKAFFEEDLQVRFRPSFFPFTEPSAEVDVMRQNGKWLEVLGCGMVHPNVLRNVGIDPEEYSGFAVGMGVERLTMLRYNVTDLRSFFENDLRFLKQFK</sequence>
<gene>
    <name evidence="1" type="primary">pheS</name>
    <name type="ordered locus">APP7_0654</name>
</gene>
<keyword id="KW-0030">Aminoacyl-tRNA synthetase</keyword>
<keyword id="KW-0067">ATP-binding</keyword>
<keyword id="KW-0963">Cytoplasm</keyword>
<keyword id="KW-0436">Ligase</keyword>
<keyword id="KW-0460">Magnesium</keyword>
<keyword id="KW-0479">Metal-binding</keyword>
<keyword id="KW-0547">Nucleotide-binding</keyword>
<keyword id="KW-0648">Protein biosynthesis</keyword>
<reference key="1">
    <citation type="submission" date="2008-06" db="EMBL/GenBank/DDBJ databases">
        <title>Genome and proteome analysis of A. pleuropneumoniae serotype 7.</title>
        <authorList>
            <person name="Linke B."/>
            <person name="Buettner F."/>
            <person name="Martinez-Arias R."/>
            <person name="Goesmann A."/>
            <person name="Baltes N."/>
            <person name="Tegetmeyer H."/>
            <person name="Singh M."/>
            <person name="Gerlach G.F."/>
        </authorList>
    </citation>
    <scope>NUCLEOTIDE SEQUENCE [LARGE SCALE GENOMIC DNA]</scope>
    <source>
        <strain>AP76</strain>
    </source>
</reference>
<protein>
    <recommendedName>
        <fullName evidence="1">Phenylalanine--tRNA ligase alpha subunit</fullName>
        <ecNumber evidence="1">6.1.1.20</ecNumber>
    </recommendedName>
    <alternativeName>
        <fullName evidence="1">Phenylalanyl-tRNA synthetase alpha subunit</fullName>
        <shortName evidence="1">PheRS</shortName>
    </alternativeName>
</protein>
<feature type="chain" id="PRO_1000114842" description="Phenylalanine--tRNA ligase alpha subunit">
    <location>
        <begin position="1"/>
        <end position="328"/>
    </location>
</feature>
<feature type="binding site" evidence="1">
    <location>
        <position position="253"/>
    </location>
    <ligand>
        <name>Mg(2+)</name>
        <dbReference type="ChEBI" id="CHEBI:18420"/>
        <note>shared with beta subunit</note>
    </ligand>
</feature>
<organism>
    <name type="scientific">Actinobacillus pleuropneumoniae serotype 7 (strain AP76)</name>
    <dbReference type="NCBI Taxonomy" id="537457"/>
    <lineage>
        <taxon>Bacteria</taxon>
        <taxon>Pseudomonadati</taxon>
        <taxon>Pseudomonadota</taxon>
        <taxon>Gammaproteobacteria</taxon>
        <taxon>Pasteurellales</taxon>
        <taxon>Pasteurellaceae</taxon>
        <taxon>Actinobacillus</taxon>
    </lineage>
</organism>
<comment type="catalytic activity">
    <reaction evidence="1">
        <text>tRNA(Phe) + L-phenylalanine + ATP = L-phenylalanyl-tRNA(Phe) + AMP + diphosphate + H(+)</text>
        <dbReference type="Rhea" id="RHEA:19413"/>
        <dbReference type="Rhea" id="RHEA-COMP:9668"/>
        <dbReference type="Rhea" id="RHEA-COMP:9699"/>
        <dbReference type="ChEBI" id="CHEBI:15378"/>
        <dbReference type="ChEBI" id="CHEBI:30616"/>
        <dbReference type="ChEBI" id="CHEBI:33019"/>
        <dbReference type="ChEBI" id="CHEBI:58095"/>
        <dbReference type="ChEBI" id="CHEBI:78442"/>
        <dbReference type="ChEBI" id="CHEBI:78531"/>
        <dbReference type="ChEBI" id="CHEBI:456215"/>
        <dbReference type="EC" id="6.1.1.20"/>
    </reaction>
</comment>
<comment type="cofactor">
    <cofactor evidence="1">
        <name>Mg(2+)</name>
        <dbReference type="ChEBI" id="CHEBI:18420"/>
    </cofactor>
    <text evidence="1">Binds 2 magnesium ions per tetramer.</text>
</comment>
<comment type="subunit">
    <text evidence="1">Tetramer of two alpha and two beta subunits.</text>
</comment>
<comment type="subcellular location">
    <subcellularLocation>
        <location evidence="1">Cytoplasm</location>
    </subcellularLocation>
</comment>
<comment type="similarity">
    <text evidence="1">Belongs to the class-II aminoacyl-tRNA synthetase family. Phe-tRNA synthetase alpha subunit type 1 subfamily.</text>
</comment>
<dbReference type="EC" id="6.1.1.20" evidence="1"/>
<dbReference type="EMBL" id="CP001091">
    <property type="protein sequence ID" value="ACE61306.1"/>
    <property type="molecule type" value="Genomic_DNA"/>
</dbReference>
<dbReference type="RefSeq" id="WP_005600743.1">
    <property type="nucleotide sequence ID" value="NC_010939.1"/>
</dbReference>
<dbReference type="SMR" id="B3H137"/>
<dbReference type="KEGG" id="apa:APP7_0654"/>
<dbReference type="HOGENOM" id="CLU_025086_0_1_6"/>
<dbReference type="Proteomes" id="UP000001226">
    <property type="component" value="Chromosome"/>
</dbReference>
<dbReference type="GO" id="GO:0005737">
    <property type="term" value="C:cytoplasm"/>
    <property type="evidence" value="ECO:0007669"/>
    <property type="project" value="UniProtKB-SubCell"/>
</dbReference>
<dbReference type="GO" id="GO:0005524">
    <property type="term" value="F:ATP binding"/>
    <property type="evidence" value="ECO:0007669"/>
    <property type="project" value="UniProtKB-UniRule"/>
</dbReference>
<dbReference type="GO" id="GO:0000287">
    <property type="term" value="F:magnesium ion binding"/>
    <property type="evidence" value="ECO:0007669"/>
    <property type="project" value="UniProtKB-UniRule"/>
</dbReference>
<dbReference type="GO" id="GO:0004826">
    <property type="term" value="F:phenylalanine-tRNA ligase activity"/>
    <property type="evidence" value="ECO:0007669"/>
    <property type="project" value="UniProtKB-UniRule"/>
</dbReference>
<dbReference type="GO" id="GO:0000049">
    <property type="term" value="F:tRNA binding"/>
    <property type="evidence" value="ECO:0007669"/>
    <property type="project" value="InterPro"/>
</dbReference>
<dbReference type="GO" id="GO:0006432">
    <property type="term" value="P:phenylalanyl-tRNA aminoacylation"/>
    <property type="evidence" value="ECO:0007669"/>
    <property type="project" value="UniProtKB-UniRule"/>
</dbReference>
<dbReference type="CDD" id="cd00496">
    <property type="entry name" value="PheRS_alpha_core"/>
    <property type="match status" value="1"/>
</dbReference>
<dbReference type="FunFam" id="3.30.930.10:FF:000003">
    <property type="entry name" value="Phenylalanine--tRNA ligase alpha subunit"/>
    <property type="match status" value="1"/>
</dbReference>
<dbReference type="Gene3D" id="3.30.930.10">
    <property type="entry name" value="Bira Bifunctional Protein, Domain 2"/>
    <property type="match status" value="1"/>
</dbReference>
<dbReference type="HAMAP" id="MF_00281">
    <property type="entry name" value="Phe_tRNA_synth_alpha1"/>
    <property type="match status" value="1"/>
</dbReference>
<dbReference type="InterPro" id="IPR006195">
    <property type="entry name" value="aa-tRNA-synth_II"/>
</dbReference>
<dbReference type="InterPro" id="IPR045864">
    <property type="entry name" value="aa-tRNA-synth_II/BPL/LPL"/>
</dbReference>
<dbReference type="InterPro" id="IPR004529">
    <property type="entry name" value="Phe-tRNA-synth_IIc_asu"/>
</dbReference>
<dbReference type="InterPro" id="IPR004188">
    <property type="entry name" value="Phe-tRNA_ligase_II_N"/>
</dbReference>
<dbReference type="InterPro" id="IPR022911">
    <property type="entry name" value="Phe_tRNA_ligase_alpha1_bac"/>
</dbReference>
<dbReference type="InterPro" id="IPR002319">
    <property type="entry name" value="Phenylalanyl-tRNA_Synthase"/>
</dbReference>
<dbReference type="InterPro" id="IPR010978">
    <property type="entry name" value="tRNA-bd_arm"/>
</dbReference>
<dbReference type="NCBIfam" id="TIGR00468">
    <property type="entry name" value="pheS"/>
    <property type="match status" value="1"/>
</dbReference>
<dbReference type="PANTHER" id="PTHR11538:SF41">
    <property type="entry name" value="PHENYLALANINE--TRNA LIGASE, MITOCHONDRIAL"/>
    <property type="match status" value="1"/>
</dbReference>
<dbReference type="PANTHER" id="PTHR11538">
    <property type="entry name" value="PHENYLALANYL-TRNA SYNTHETASE"/>
    <property type="match status" value="1"/>
</dbReference>
<dbReference type="Pfam" id="PF02912">
    <property type="entry name" value="Phe_tRNA-synt_N"/>
    <property type="match status" value="1"/>
</dbReference>
<dbReference type="Pfam" id="PF01409">
    <property type="entry name" value="tRNA-synt_2d"/>
    <property type="match status" value="1"/>
</dbReference>
<dbReference type="SUPFAM" id="SSF55681">
    <property type="entry name" value="Class II aaRS and biotin synthetases"/>
    <property type="match status" value="1"/>
</dbReference>
<dbReference type="SUPFAM" id="SSF46589">
    <property type="entry name" value="tRNA-binding arm"/>
    <property type="match status" value="1"/>
</dbReference>
<dbReference type="PROSITE" id="PS50862">
    <property type="entry name" value="AA_TRNA_LIGASE_II"/>
    <property type="match status" value="1"/>
</dbReference>